<proteinExistence type="evidence at transcript level"/>
<dbReference type="EC" id="1.-.-.-" evidence="7"/>
<dbReference type="EMBL" id="KB446562">
    <property type="protein sequence ID" value="EME79063.1"/>
    <property type="molecule type" value="Genomic_DNA"/>
</dbReference>
<dbReference type="RefSeq" id="XP_007929887.1">
    <property type="nucleotide sequence ID" value="XM_007931696.1"/>
</dbReference>
<dbReference type="SMR" id="M3APK9"/>
<dbReference type="GeneID" id="19331854"/>
<dbReference type="KEGG" id="pfj:MYCFIDRAFT_156381"/>
<dbReference type="VEuPathDB" id="FungiDB:MYCFIDRAFT_156381"/>
<dbReference type="eggNOG" id="ENOG502QU2T">
    <property type="taxonomic scope" value="Eukaryota"/>
</dbReference>
<dbReference type="HOGENOM" id="CLU_023205_1_1_1"/>
<dbReference type="OrthoDB" id="2310150at2759"/>
<dbReference type="Proteomes" id="UP000016932">
    <property type="component" value="Unassembled WGS sequence"/>
</dbReference>
<dbReference type="GO" id="GO:0016491">
    <property type="term" value="F:oxidoreductase activity"/>
    <property type="evidence" value="ECO:0007669"/>
    <property type="project" value="UniProtKB-KW"/>
</dbReference>
<dbReference type="CDD" id="cd19075">
    <property type="entry name" value="AKR_AKR7A1-5"/>
    <property type="match status" value="1"/>
</dbReference>
<dbReference type="Gene3D" id="3.20.20.100">
    <property type="entry name" value="NADP-dependent oxidoreductase domain"/>
    <property type="match status" value="1"/>
</dbReference>
<dbReference type="InterPro" id="IPR050523">
    <property type="entry name" value="AKR_Detox_Biosynth"/>
</dbReference>
<dbReference type="InterPro" id="IPR023210">
    <property type="entry name" value="NADP_OxRdtase_dom"/>
</dbReference>
<dbReference type="InterPro" id="IPR036812">
    <property type="entry name" value="NADP_OxRdtase_dom_sf"/>
</dbReference>
<dbReference type="PANTHER" id="PTHR43364:SF4">
    <property type="entry name" value="NAD(P)-LINKED OXIDOREDUCTASE SUPERFAMILY PROTEIN"/>
    <property type="match status" value="1"/>
</dbReference>
<dbReference type="PANTHER" id="PTHR43364">
    <property type="entry name" value="NADH-SPECIFIC METHYLGLYOXAL REDUCTASE-RELATED"/>
    <property type="match status" value="1"/>
</dbReference>
<dbReference type="Pfam" id="PF00248">
    <property type="entry name" value="Aldo_ket_red"/>
    <property type="match status" value="1"/>
</dbReference>
<dbReference type="SUPFAM" id="SSF51430">
    <property type="entry name" value="NAD(P)-linked oxidoreductase"/>
    <property type="match status" value="1"/>
</dbReference>
<sequence length="296" mass="33274">MLDTLQKHGHCEVDTARIYGFGSTEEHLAQLKWQERGIAVGTKLTAKKIGPKEYSHKKESLKPGLSESLKALGSERVDTFYLHTPDHNTPYAETLEAVNELYKAGYFKKFGICNYAAWEVAQICELCNANGWKKPDIYQGAYSALQRNIETELFPCLRYYGISFYSFSPLAGGMLTDRYGRETSEYEGGNRFDPNNARGFYRKLYWNEPTFAALDIIRPLAQKHGMTTTKAALRWISHHSAMKGDKGDAVVIGSSSAEQLESNLSNLEKGPLPEDLVQAFEEAWSVVKVNTAPYFA</sequence>
<accession>M3APK9</accession>
<keyword id="KW-0521">NADP</keyword>
<keyword id="KW-0560">Oxidoreductase</keyword>
<keyword id="KW-1185">Reference proteome</keyword>
<evidence type="ECO:0000250" key="1">
    <source>
        <dbReference type="UniProtKB" id="O43488"/>
    </source>
</evidence>
<evidence type="ECO:0000250" key="2">
    <source>
        <dbReference type="UniProtKB" id="Q8CG76"/>
    </source>
</evidence>
<evidence type="ECO:0000269" key="3">
    <source>
    </source>
</evidence>
<evidence type="ECO:0000269" key="4">
    <source>
    </source>
</evidence>
<evidence type="ECO:0000303" key="5">
    <source>
    </source>
</evidence>
<evidence type="ECO:0000305" key="6"/>
<evidence type="ECO:0000305" key="7">
    <source>
    </source>
</evidence>
<organism>
    <name type="scientific">Pseudocercospora fijiensis (strain CIRAD86)</name>
    <name type="common">Black leaf streak disease fungus</name>
    <name type="synonym">Mycosphaerella fijiensis</name>
    <dbReference type="NCBI Taxonomy" id="383855"/>
    <lineage>
        <taxon>Eukaryota</taxon>
        <taxon>Fungi</taxon>
        <taxon>Dikarya</taxon>
        <taxon>Ascomycota</taxon>
        <taxon>Pezizomycotina</taxon>
        <taxon>Dothideomycetes</taxon>
        <taxon>Dothideomycetidae</taxon>
        <taxon>Mycosphaerellales</taxon>
        <taxon>Mycosphaerellaceae</taxon>
        <taxon>Pseudocercospora</taxon>
    </lineage>
</organism>
<gene>
    <name type="ORF">MYCFIDRAFT_156381</name>
</gene>
<protein>
    <recommendedName>
        <fullName evidence="5">Aldo-keto reductase MYCFIDRAFT_156381</fullName>
        <ecNumber evidence="7">1.-.-.-</ecNumber>
    </recommendedName>
    <alternativeName>
        <fullName evidence="5">PKS8-1 gene cluster protein MYCFIDRAFT_156381</fullName>
    </alternativeName>
</protein>
<feature type="chain" id="PRO_0000451124" description="Aldo-keto reductase MYCFIDRAFT_156381">
    <location>
        <begin position="1"/>
        <end position="296"/>
    </location>
</feature>
<feature type="active site" description="Proton donor" evidence="2">
    <location>
        <position position="19"/>
    </location>
</feature>
<feature type="binding site" evidence="2">
    <location>
        <position position="14"/>
    </location>
    <ligand>
        <name>NADP(+)</name>
        <dbReference type="ChEBI" id="CHEBI:58349"/>
    </ligand>
</feature>
<feature type="binding site" evidence="2">
    <location>
        <position position="83"/>
    </location>
    <ligand>
        <name>substrate</name>
    </ligand>
</feature>
<feature type="binding site" evidence="2">
    <location>
        <begin position="113"/>
        <end position="114"/>
    </location>
    <ligand>
        <name>NADP(+)</name>
        <dbReference type="ChEBI" id="CHEBI:58349"/>
    </ligand>
</feature>
<feature type="binding site" evidence="2">
    <location>
        <position position="139"/>
    </location>
    <ligand>
        <name>NADP(+)</name>
        <dbReference type="ChEBI" id="CHEBI:58349"/>
    </ligand>
</feature>
<feature type="binding site" evidence="2">
    <location>
        <begin position="168"/>
        <end position="178"/>
    </location>
    <ligand>
        <name>NADP(+)</name>
        <dbReference type="ChEBI" id="CHEBI:58349"/>
    </ligand>
</feature>
<feature type="binding site" evidence="2">
    <location>
        <position position="191"/>
    </location>
    <ligand>
        <name>NADP(+)</name>
        <dbReference type="ChEBI" id="CHEBI:58349"/>
    </ligand>
</feature>
<feature type="binding site" evidence="2">
    <location>
        <position position="201"/>
    </location>
    <ligand>
        <name>substrate</name>
    </ligand>
</feature>
<feature type="binding site" evidence="2">
    <location>
        <begin position="255"/>
        <end position="263"/>
    </location>
    <ligand>
        <name>NADP(+)</name>
        <dbReference type="ChEBI" id="CHEBI:58349"/>
    </ligand>
</feature>
<feature type="site" description="Lowers pKa of active site Tyr" evidence="1">
    <location>
        <position position="47"/>
    </location>
</feature>
<comment type="function">
    <text evidence="3 4 7">Aldo-keto reductase; part of the gene cluster that mediates the biosynthesis of an emodin derivative that may be involved in black Sigatoka disease of banana (PubMed:27388157, PubMed:30735556). The pathway begins with the synthesis of atrochrysone thioester by the polyketide synthase PKS8-1 (Probable). The atrochrysone carboxyl ACP thioesterase MYCFIDRAFT_190111 then breaks the thioester bond and releases the atrochrysone carboxylic acid from PKS8-1 (Probable). The decarboxylase MYCFIDRAFT_34057 then catalyzes the concerted decarboxylation-elimination required to convert atochrysone carboxylic acid into emodin anthrone, which is further oxidized to emodin by the anthrone oxygenase MYCFIDRAFT_34418 (Probable). The functions of the other tailoring enzymes as well as the final product of the cluster have still to be identified (Probable).</text>
</comment>
<comment type="pathway">
    <text evidence="7">Secondary metabolite biosynthesis.</text>
</comment>
<comment type="induction">
    <text evidence="4">Does not seem to be up-regulated during banana leaves infection.</text>
</comment>
<comment type="similarity">
    <text evidence="6">Belongs to the aldo/keto reductase family. Aldo/keto reductase 2 subfamily.</text>
</comment>
<name>PK81G_PSEFD</name>
<reference key="1">
    <citation type="journal article" date="2012" name="PLoS Pathog.">
        <title>Diverse lifestyles and strategies of plant pathogenesis encoded in the genomes of eighteen Dothideomycetes fungi.</title>
        <authorList>
            <person name="Ohm R.A."/>
            <person name="Feau N."/>
            <person name="Henrissat B."/>
            <person name="Schoch C.L."/>
            <person name="Horwitz B.A."/>
            <person name="Barry K.W."/>
            <person name="Condon B.J."/>
            <person name="Copeland A.C."/>
            <person name="Dhillon B."/>
            <person name="Glaser F."/>
            <person name="Hesse C.N."/>
            <person name="Kosti I."/>
            <person name="LaButti K."/>
            <person name="Lindquist E.A."/>
            <person name="Lucas S."/>
            <person name="Salamov A.A."/>
            <person name="Bradshaw R.E."/>
            <person name="Ciuffetti L."/>
            <person name="Hamelin R.C."/>
            <person name="Kema G.H.J."/>
            <person name="Lawrence C."/>
            <person name="Scott J.A."/>
            <person name="Spatafora J.W."/>
            <person name="Turgeon B.G."/>
            <person name="de Wit P.J.G.M."/>
            <person name="Zhong S."/>
            <person name="Goodwin S.B."/>
            <person name="Grigoriev I.V."/>
        </authorList>
    </citation>
    <scope>NUCLEOTIDE SEQUENCE [LARGE SCALE GENOMIC DNA]</scope>
    <source>
        <strain>CIRAD86</strain>
    </source>
</reference>
<reference key="2">
    <citation type="journal article" date="2016" name="PLoS ONE">
        <title>Bioinformatics prediction of polyketide synthase gene clusters from Mycosphaerella fijiensis.</title>
        <authorList>
            <person name="Noar R.D."/>
            <person name="Daub M.E."/>
        </authorList>
    </citation>
    <scope>IDENTIFICATION</scope>
    <scope>FUNCTION</scope>
</reference>
<reference key="3">
    <citation type="journal article" date="2019" name="PLoS ONE">
        <title>A novel polyketide synthase gene cluster in the plant pathogenic fungus Pseudocercospora fijiensis.</title>
        <authorList>
            <person name="Noar R.D."/>
            <person name="Thomas E."/>
            <person name="Daub M.E."/>
        </authorList>
    </citation>
    <scope>FUNCTION</scope>
    <scope>INDUCTION</scope>
    <scope>PATHWAY</scope>
</reference>